<accession>C1AML8</accession>
<evidence type="ECO:0000255" key="1">
    <source>
        <dbReference type="HAMAP-Rule" id="MF_00237"/>
    </source>
</evidence>
<evidence type="ECO:0000256" key="2">
    <source>
        <dbReference type="SAM" id="MobiDB-lite"/>
    </source>
</evidence>
<organism>
    <name type="scientific">Mycobacterium bovis (strain BCG / Tokyo 172 / ATCC 35737 / TMC 1019)</name>
    <dbReference type="NCBI Taxonomy" id="561275"/>
    <lineage>
        <taxon>Bacteria</taxon>
        <taxon>Bacillati</taxon>
        <taxon>Actinomycetota</taxon>
        <taxon>Actinomycetes</taxon>
        <taxon>Mycobacteriales</taxon>
        <taxon>Mycobacteriaceae</taxon>
        <taxon>Mycobacterium</taxon>
        <taxon>Mycobacterium tuberculosis complex</taxon>
    </lineage>
</organism>
<dbReference type="EMBL" id="AP010918">
    <property type="protein sequence ID" value="BAH25547.1"/>
    <property type="molecule type" value="Genomic_DNA"/>
</dbReference>
<dbReference type="RefSeq" id="WP_003406260.1">
    <property type="nucleotide sequence ID" value="NZ_CP014566.1"/>
</dbReference>
<dbReference type="SMR" id="C1AML8"/>
<dbReference type="GeneID" id="45425194"/>
<dbReference type="KEGG" id="mbt:JTY_1259"/>
<dbReference type="HOGENOM" id="CLU_086034_2_0_11"/>
<dbReference type="GO" id="GO:0033281">
    <property type="term" value="C:TAT protein transport complex"/>
    <property type="evidence" value="ECO:0007669"/>
    <property type="project" value="UniProtKB-UniRule"/>
</dbReference>
<dbReference type="GO" id="GO:0008320">
    <property type="term" value="F:protein transmembrane transporter activity"/>
    <property type="evidence" value="ECO:0007669"/>
    <property type="project" value="UniProtKB-UniRule"/>
</dbReference>
<dbReference type="GO" id="GO:0043953">
    <property type="term" value="P:protein transport by the Tat complex"/>
    <property type="evidence" value="ECO:0007669"/>
    <property type="project" value="UniProtKB-UniRule"/>
</dbReference>
<dbReference type="Gene3D" id="1.20.5.3310">
    <property type="match status" value="1"/>
</dbReference>
<dbReference type="HAMAP" id="MF_00237">
    <property type="entry name" value="TatB"/>
    <property type="match status" value="1"/>
</dbReference>
<dbReference type="InterPro" id="IPR003369">
    <property type="entry name" value="TatA/B/E"/>
</dbReference>
<dbReference type="InterPro" id="IPR018448">
    <property type="entry name" value="TatB"/>
</dbReference>
<dbReference type="NCBIfam" id="TIGR01410">
    <property type="entry name" value="tatB"/>
    <property type="match status" value="1"/>
</dbReference>
<dbReference type="Pfam" id="PF02416">
    <property type="entry name" value="TatA_B_E"/>
    <property type="match status" value="1"/>
</dbReference>
<dbReference type="PRINTS" id="PR01506">
    <property type="entry name" value="TATBPROTEIN"/>
</dbReference>
<gene>
    <name evidence="1" type="primary">tatB</name>
    <name type="ordered locus">JTY_1259</name>
</gene>
<keyword id="KW-1003">Cell membrane</keyword>
<keyword id="KW-0472">Membrane</keyword>
<keyword id="KW-0653">Protein transport</keyword>
<keyword id="KW-0811">Translocation</keyword>
<keyword id="KW-0812">Transmembrane</keyword>
<keyword id="KW-1133">Transmembrane helix</keyword>
<keyword id="KW-0813">Transport</keyword>
<comment type="function">
    <text evidence="1">Part of the twin-arginine translocation (Tat) system that transports large folded proteins containing a characteristic twin-arginine motif in their signal peptide across membranes. Together with TatC, TatB is part of a receptor directly interacting with Tat signal peptides. TatB may form an oligomeric binding site that transiently accommodates folded Tat precursor proteins before their translocation.</text>
</comment>
<comment type="subunit">
    <text evidence="1">The Tat system comprises two distinct complexes: a TatABC complex, containing multiple copies of TatA, TatB and TatC subunits, and a separate TatA complex, containing only TatA subunits. Substrates initially bind to the TatABC complex, which probably triggers association of the separate TatA complex to form the active translocon.</text>
</comment>
<comment type="subcellular location">
    <subcellularLocation>
        <location evidence="1">Cell membrane</location>
        <topology evidence="1">Single-pass membrane protein</topology>
    </subcellularLocation>
</comment>
<comment type="similarity">
    <text evidence="1">Belongs to the TatB family.</text>
</comment>
<reference key="1">
    <citation type="journal article" date="2009" name="Vaccine">
        <title>Whole genome sequence analysis of Mycobacterium bovis bacillus Calmette-Guerin (BCG) Tokyo 172: a comparative study of BCG vaccine substrains.</title>
        <authorList>
            <person name="Seki M."/>
            <person name="Honda I."/>
            <person name="Fujita I."/>
            <person name="Yano I."/>
            <person name="Yamamoto S."/>
            <person name="Koyama A."/>
        </authorList>
    </citation>
    <scope>NUCLEOTIDE SEQUENCE [LARGE SCALE GENOMIC DNA]</scope>
    <source>
        <strain>BCG / Tokyo 172 / ATCC 35737 / TMC 1019</strain>
    </source>
</reference>
<sequence length="131" mass="13985">MFANIGWGEMLVLVMVGLVVLGPERLPGAIRWAASALRQARDYLSGVTSQLREDIGPEFDDLRGHLGELQKLRGMTPRAALTKHLLDGDDSLFTGDFDRPTPKKPDAAGSAGPDATEQIGAGPIPFDSDAT</sequence>
<feature type="chain" id="PRO_1000196660" description="Sec-independent protein translocase protein TatB">
    <location>
        <begin position="1"/>
        <end position="131"/>
    </location>
</feature>
<feature type="transmembrane region" description="Helical" evidence="1">
    <location>
        <begin position="2"/>
        <end position="22"/>
    </location>
</feature>
<feature type="region of interest" description="Disordered" evidence="2">
    <location>
        <begin position="90"/>
        <end position="131"/>
    </location>
</feature>
<feature type="compositionally biased region" description="Basic and acidic residues" evidence="2">
    <location>
        <begin position="96"/>
        <end position="106"/>
    </location>
</feature>
<protein>
    <recommendedName>
        <fullName evidence="1">Sec-independent protein translocase protein TatB</fullName>
    </recommendedName>
</protein>
<name>TATB_MYCBT</name>
<proteinExistence type="inferred from homology"/>